<proteinExistence type="evidence at protein level"/>
<dbReference type="EC" id="3.1.3.77"/>
<dbReference type="STRING" id="548.EAG7_02747"/>
<dbReference type="UniPathway" id="UPA00904">
    <property type="reaction ID" value="UER00876"/>
</dbReference>
<dbReference type="UniPathway" id="UPA00904">
    <property type="reaction ID" value="UER00877"/>
</dbReference>
<dbReference type="GO" id="GO:0043874">
    <property type="term" value="F:acireductone synthase activity"/>
    <property type="evidence" value="ECO:0007669"/>
    <property type="project" value="UniProtKB-EC"/>
</dbReference>
<dbReference type="GO" id="GO:0046872">
    <property type="term" value="F:metal ion binding"/>
    <property type="evidence" value="ECO:0007669"/>
    <property type="project" value="UniProtKB-KW"/>
</dbReference>
<dbReference type="GO" id="GO:0019509">
    <property type="term" value="P:L-methionine salvage from methylthioadenosine"/>
    <property type="evidence" value="ECO:0007669"/>
    <property type="project" value="UniProtKB-UniPathway"/>
</dbReference>
<evidence type="ECO:0000269" key="1">
    <source>
    </source>
</evidence>
<evidence type="ECO:0000305" key="2"/>
<accession>P0C8L5</accession>
<feature type="chain" id="PRO_0000357372" description="Enolase-phosphatase E1">
    <location>
        <begin position="1" status="less than"/>
        <end position="26" status="greater than"/>
    </location>
</feature>
<feature type="non-terminal residue">
    <location>
        <position position="1"/>
    </location>
</feature>
<feature type="non-terminal residue">
    <location>
        <position position="26"/>
    </location>
</feature>
<comment type="function">
    <text>Bifunctional enzyme that catalyzes the enolization of 2,3-diketo-5-methylthiopentyl-1-phosphate (DK-MTP-1-P) into the intermediate 2-hydroxy-3-keto-5-methylthiopentenyl-1-phosphate (HK-MTPenyl-1-P), which is then dephosphorylated to form the acireductone 1,2-dihydroxy-3-keto-5-methylthiopentene (DHK-MTPene).</text>
</comment>
<comment type="catalytic activity">
    <reaction evidence="1">
        <text>5-methylsulfanyl-2,3-dioxopentyl phosphate + H2O = 1,2-dihydroxy-5-(methylsulfanyl)pent-1-en-3-one + phosphate</text>
        <dbReference type="Rhea" id="RHEA:21700"/>
        <dbReference type="ChEBI" id="CHEBI:15377"/>
        <dbReference type="ChEBI" id="CHEBI:43474"/>
        <dbReference type="ChEBI" id="CHEBI:49252"/>
        <dbReference type="ChEBI" id="CHEBI:58828"/>
        <dbReference type="EC" id="3.1.3.77"/>
    </reaction>
</comment>
<comment type="cofactor">
    <cofactor evidence="1">
        <name>Mg(2+)</name>
        <dbReference type="ChEBI" id="CHEBI:18420"/>
    </cofactor>
    <text evidence="1">Binds 1 Mg(2+) ion per subunit.</text>
</comment>
<comment type="pathway">
    <text>Amino-acid biosynthesis; L-methionine biosynthesis via salvage pathway; L-methionine from S-methyl-5-thio-alpha-D-ribose 1-phosphate: step 3/6.</text>
</comment>
<comment type="pathway">
    <text>Amino-acid biosynthesis; L-methionine biosynthesis via salvage pathway; L-methionine from S-methyl-5-thio-alpha-D-ribose 1-phosphate: step 4/6.</text>
</comment>
<comment type="subunit">
    <text evidence="1">Monomer.</text>
</comment>
<comment type="similarity">
    <text evidence="2">Belongs to the HAD-like hydrolase superfamily. MasA/MtnC family.</text>
</comment>
<reference key="1">
    <citation type="journal article" date="1993" name="J. Biol. Chem.">
        <title>Purification and characterization of an enzyme involved in oxidative carbon-carbon bond cleavage reactions in the methionine salvage pathway of Klebsiella pneumoniae.</title>
        <authorList>
            <person name="Myers R.W."/>
            <person name="Wray J.W."/>
            <person name="Fish S."/>
            <person name="Abeles R.H."/>
        </authorList>
    </citation>
    <scope>PROTEIN SEQUENCE</scope>
    <scope>CATALYTIC ACTIVITY</scope>
    <scope>COFACTOR</scope>
    <scope>SUBUNIT</scope>
</reference>
<gene>
    <name type="primary">mtnC</name>
</gene>
<name>MTNC_KLEAE</name>
<protein>
    <recommendedName>
        <fullName>Enolase-phosphatase E1</fullName>
        <ecNumber>3.1.3.77</ecNumber>
    </recommendedName>
    <alternativeName>
        <fullName>2,3-diketo-5-methylthio-1-phosphopentane phosphatase</fullName>
    </alternativeName>
</protein>
<organism>
    <name type="scientific">Klebsiella aerogenes</name>
    <name type="common">Enterobacter aerogenes</name>
    <dbReference type="NCBI Taxonomy" id="548"/>
    <lineage>
        <taxon>Bacteria</taxon>
        <taxon>Pseudomonadati</taxon>
        <taxon>Pseudomonadota</taxon>
        <taxon>Gammaproteobacteria</taxon>
        <taxon>Enterobacterales</taxon>
        <taxon>Enterobacteriaceae</taxon>
        <taxon>Klebsiella/Raoultella group</taxon>
        <taxon>Klebsiella</taxon>
    </lineage>
</organism>
<keyword id="KW-0028">Amino-acid biosynthesis</keyword>
<keyword id="KW-0903">Direct protein sequencing</keyword>
<keyword id="KW-0378">Hydrolase</keyword>
<keyword id="KW-0460">Magnesium</keyword>
<keyword id="KW-0479">Metal-binding</keyword>
<keyword id="KW-0486">Methionine biosynthesis</keyword>
<sequence>MIXAIVTDIEGTTSDTXFVXNVLFPY</sequence>